<sequence length="105" mass="11107">MKTASPSKKSLSRILPHLLLALIVSIAAIEPNLAHANGGLDKVNTSMQKVLDLLSGVSITIVTIAIIWSGYKMAFRHARFMDVVPVLGGALVVGAAAEIASYLLR</sequence>
<reference key="1">
    <citation type="journal article" date="2005" name="J. Bacteriol.">
        <title>Completion of the genome sequence of Brucella abortus and comparison to the highly similar genomes of Brucella melitensis and Brucella suis.</title>
        <authorList>
            <person name="Halling S.M."/>
            <person name="Peterson-Burch B.D."/>
            <person name="Bricker B.J."/>
            <person name="Zuerner R.L."/>
            <person name="Qing Z."/>
            <person name="Li L.-L."/>
            <person name="Kapur V."/>
            <person name="Alt D.P."/>
            <person name="Olsen S.C."/>
        </authorList>
    </citation>
    <scope>NUCLEOTIDE SEQUENCE [LARGE SCALE GENOMIC DNA]</scope>
    <source>
        <strain>9-941</strain>
    </source>
</reference>
<evidence type="ECO:0000255" key="1"/>
<evidence type="ECO:0000305" key="2"/>
<gene>
    <name type="primary">virB2</name>
    <name type="ordered locus">BruAb2_0068</name>
</gene>
<organism>
    <name type="scientific">Brucella abortus biovar 1 (strain 9-941)</name>
    <dbReference type="NCBI Taxonomy" id="262698"/>
    <lineage>
        <taxon>Bacteria</taxon>
        <taxon>Pseudomonadati</taxon>
        <taxon>Pseudomonadota</taxon>
        <taxon>Alphaproteobacteria</taxon>
        <taxon>Hyphomicrobiales</taxon>
        <taxon>Brucellaceae</taxon>
        <taxon>Brucella/Ochrobactrum group</taxon>
        <taxon>Brucella</taxon>
    </lineage>
</organism>
<dbReference type="EMBL" id="AE017224">
    <property type="protein sequence ID" value="AAX75519.1"/>
    <property type="molecule type" value="Genomic_DNA"/>
</dbReference>
<dbReference type="RefSeq" id="WP_002967165.1">
    <property type="nucleotide sequence ID" value="NC_006933.1"/>
</dbReference>
<dbReference type="SMR" id="P0C528"/>
<dbReference type="EnsemblBacteria" id="AAX75519">
    <property type="protein sequence ID" value="AAX75519"/>
    <property type="gene ID" value="BruAb2_0068"/>
</dbReference>
<dbReference type="KEGG" id="bmb:BruAb2_0068"/>
<dbReference type="HOGENOM" id="CLU_155084_1_1_5"/>
<dbReference type="PRO" id="PR:P0C528"/>
<dbReference type="Proteomes" id="UP000000540">
    <property type="component" value="Chromosome II"/>
</dbReference>
<dbReference type="GO" id="GO:0005886">
    <property type="term" value="C:plasma membrane"/>
    <property type="evidence" value="ECO:0007669"/>
    <property type="project" value="UniProtKB-SubCell"/>
</dbReference>
<dbReference type="InterPro" id="IPR007039">
    <property type="entry name" value="TrbC/VirB2"/>
</dbReference>
<dbReference type="Pfam" id="PF04956">
    <property type="entry name" value="TrbC"/>
    <property type="match status" value="1"/>
</dbReference>
<feature type="signal peptide" evidence="1">
    <location>
        <begin position="1"/>
        <end position="36"/>
    </location>
</feature>
<feature type="chain" id="PRO_0000291450" description="Type IV secretion system protein virB2">
    <location>
        <begin position="37"/>
        <end position="105"/>
    </location>
</feature>
<feature type="transmembrane region" description="Helical" evidence="1">
    <location>
        <begin position="50"/>
        <end position="70"/>
    </location>
</feature>
<feature type="transmembrane region" description="Helical" evidence="1">
    <location>
        <begin position="83"/>
        <end position="103"/>
    </location>
</feature>
<name>VIRB2_BRUAB</name>
<comment type="subcellular location">
    <subcellularLocation>
        <location evidence="2">Cell membrane</location>
        <topology evidence="2">Multi-pass membrane protein</topology>
    </subcellularLocation>
</comment>
<comment type="similarity">
    <text evidence="2">Belongs to the PtlA family.</text>
</comment>
<accession>P0C528</accession>
<accession>Q57A15</accession>
<accession>Q7BMZ9</accession>
<keyword id="KW-1003">Cell membrane</keyword>
<keyword id="KW-0472">Membrane</keyword>
<keyword id="KW-0732">Signal</keyword>
<keyword id="KW-0812">Transmembrane</keyword>
<keyword id="KW-1133">Transmembrane helix</keyword>
<keyword id="KW-0843">Virulence</keyword>
<protein>
    <recommendedName>
        <fullName>Type IV secretion system protein virB2</fullName>
    </recommendedName>
</protein>
<proteinExistence type="inferred from homology"/>